<sequence length="226" mass="26711">MLHFGGFIMEINHISKILEKEREEYIRNKVEEYLKQGFSKDDAVNKANQSWRTYIGHRIQDVIYNLLKKFLKDSGLKVTTDKALNNRNLPEELDKVKRLIAINYGEYLFLPDADVIVYKVENNDIKIIAIISVKNSFRERRFETTYWKLKLKESPVTSHIKVFLATPDKDNEISYKCPNGKPKKMRIILEYELDGIYFLKEDFEETEKAKHFGKIVEDIIEISKKL</sequence>
<accession>P81326</accession>
<evidence type="ECO:0000303" key="1">
    <source>
    </source>
</evidence>
<evidence type="ECO:0000305" key="2"/>
<proteinExistence type="inferred from homology"/>
<keyword id="KW-0238">DNA-binding</keyword>
<keyword id="KW-0255">Endonuclease</keyword>
<keyword id="KW-0378">Hydrolase</keyword>
<keyword id="KW-0540">Nuclease</keyword>
<keyword id="KW-1185">Reference proteome</keyword>
<keyword id="KW-0680">Restriction system</keyword>
<feature type="chain" id="PRO_0000077337" description="Putative type II restriction enzyme MjaVIP">
    <location>
        <begin position="1"/>
        <end position="226"/>
    </location>
</feature>
<name>T2M6_METJA</name>
<dbReference type="EC" id="3.1.21.4"/>
<dbReference type="EMBL" id="L77117">
    <property type="protein sequence ID" value="AAB99221.1"/>
    <property type="molecule type" value="Genomic_DNA"/>
</dbReference>
<dbReference type="FunCoup" id="P81326">
    <property type="interactions" value="208"/>
</dbReference>
<dbReference type="STRING" id="243232.MJ_1208.1"/>
<dbReference type="REBASE" id="16564">
    <property type="entry name" value="MjaVIP"/>
</dbReference>
<dbReference type="PaxDb" id="243232-MJ_1208.1"/>
<dbReference type="EnsemblBacteria" id="AAB99221">
    <property type="protein sequence ID" value="AAB99221"/>
    <property type="gene ID" value="MJ_1208.1"/>
</dbReference>
<dbReference type="KEGG" id="mja:MJ_1208.1"/>
<dbReference type="eggNOG" id="arCOG00115">
    <property type="taxonomic scope" value="Archaea"/>
</dbReference>
<dbReference type="HOGENOM" id="CLU_095647_0_0_2"/>
<dbReference type="InParanoid" id="P81326"/>
<dbReference type="OrthoDB" id="374580at2157"/>
<dbReference type="PhylomeDB" id="P81326"/>
<dbReference type="PRO" id="PR:P81326"/>
<dbReference type="Proteomes" id="UP000000805">
    <property type="component" value="Chromosome"/>
</dbReference>
<dbReference type="GO" id="GO:0003677">
    <property type="term" value="F:DNA binding"/>
    <property type="evidence" value="ECO:0007669"/>
    <property type="project" value="UniProtKB-KW"/>
</dbReference>
<dbReference type="GO" id="GO:0009036">
    <property type="term" value="F:type II site-specific deoxyribonuclease activity"/>
    <property type="evidence" value="ECO:0007669"/>
    <property type="project" value="UniProtKB-EC"/>
</dbReference>
<dbReference type="GO" id="GO:0009307">
    <property type="term" value="P:DNA restriction-modification system"/>
    <property type="evidence" value="ECO:0007669"/>
    <property type="project" value="UniProtKB-KW"/>
</dbReference>
<dbReference type="InterPro" id="IPR041551">
    <property type="entry name" value="RE_BsaWI"/>
</dbReference>
<dbReference type="Pfam" id="PF18643">
    <property type="entry name" value="RE_BsaWI"/>
    <property type="match status" value="1"/>
</dbReference>
<organism>
    <name type="scientific">Methanocaldococcus jannaschii (strain ATCC 43067 / DSM 2661 / JAL-1 / JCM 10045 / NBRC 100440)</name>
    <name type="common">Methanococcus jannaschii</name>
    <dbReference type="NCBI Taxonomy" id="243232"/>
    <lineage>
        <taxon>Archaea</taxon>
        <taxon>Methanobacteriati</taxon>
        <taxon>Methanobacteriota</taxon>
        <taxon>Methanomada group</taxon>
        <taxon>Methanococci</taxon>
        <taxon>Methanococcales</taxon>
        <taxon>Methanocaldococcaceae</taxon>
        <taxon>Methanocaldococcus</taxon>
    </lineage>
</organism>
<comment type="function">
    <text evidence="1">A P subtype restriction enzyme that recognizes the double-stranded sequence 5'-CCGG-3'; the cleavage site is unknown.</text>
</comment>
<comment type="catalytic activity">
    <reaction>
        <text>Endonucleolytic cleavage of DNA to give specific double-stranded fragments with terminal 5'-phosphates.</text>
        <dbReference type="EC" id="3.1.21.4"/>
    </reaction>
</comment>
<comment type="similarity">
    <text evidence="2">Belongs to the BsaWI type II restriction endonuclease family.</text>
</comment>
<reference key="1">
    <citation type="journal article" date="1996" name="Science">
        <title>Complete genome sequence of the methanogenic archaeon, Methanococcus jannaschii.</title>
        <authorList>
            <person name="Bult C.J."/>
            <person name="White O."/>
            <person name="Olsen G.J."/>
            <person name="Zhou L."/>
            <person name="Fleischmann R.D."/>
            <person name="Sutton G.G."/>
            <person name="Blake J.A."/>
            <person name="FitzGerald L.M."/>
            <person name="Clayton R.A."/>
            <person name="Gocayne J.D."/>
            <person name="Kerlavage A.R."/>
            <person name="Dougherty B.A."/>
            <person name="Tomb J.-F."/>
            <person name="Adams M.D."/>
            <person name="Reich C.I."/>
            <person name="Overbeek R."/>
            <person name="Kirkness E.F."/>
            <person name="Weinstock K.G."/>
            <person name="Merrick J.M."/>
            <person name="Glodek A."/>
            <person name="Scott J.L."/>
            <person name="Geoghagen N.S.M."/>
            <person name="Weidman J.F."/>
            <person name="Fuhrmann J.L."/>
            <person name="Nguyen D."/>
            <person name="Utterback T.R."/>
            <person name="Kelley J.M."/>
            <person name="Peterson J.D."/>
            <person name="Sadow P.W."/>
            <person name="Hanna M.C."/>
            <person name="Cotton M.D."/>
            <person name="Roberts K.M."/>
            <person name="Hurst M.A."/>
            <person name="Kaine B.P."/>
            <person name="Borodovsky M."/>
            <person name="Klenk H.-P."/>
            <person name="Fraser C.M."/>
            <person name="Smith H.O."/>
            <person name="Woese C.R."/>
            <person name="Venter J.C."/>
        </authorList>
    </citation>
    <scope>NUCLEOTIDE SEQUENCE [LARGE SCALE GENOMIC DNA]</scope>
    <source>
        <strain>ATCC 43067 / DSM 2661 / JAL-1 / JCM 10045 / NBRC 100440</strain>
    </source>
</reference>
<reference key="2">
    <citation type="journal article" date="2003" name="Nucleic Acids Res.">
        <title>A nomenclature for restriction enzymes, DNA methyltransferases, homing endonucleases and their genes.</title>
        <authorList>
            <person name="Roberts R.J."/>
            <person name="Belfort M."/>
            <person name="Bestor T."/>
            <person name="Bhagwat A.S."/>
            <person name="Bickle T.A."/>
            <person name="Bitinaite J."/>
            <person name="Blumenthal R.M."/>
            <person name="Degtyarev S.K."/>
            <person name="Dryden D.T."/>
            <person name="Dybvig K."/>
            <person name="Firman K."/>
            <person name="Gromova E.S."/>
            <person name="Gumport R.I."/>
            <person name="Halford S.E."/>
            <person name="Hattman S."/>
            <person name="Heitman J."/>
            <person name="Hornby D.P."/>
            <person name="Janulaitis A."/>
            <person name="Jeltsch A."/>
            <person name="Josephsen J."/>
            <person name="Kiss A."/>
            <person name="Klaenhammer T.R."/>
            <person name="Kobayashi I."/>
            <person name="Kong H."/>
            <person name="Krueger D.H."/>
            <person name="Lacks S."/>
            <person name="Marinus M.G."/>
            <person name="Miyahara M."/>
            <person name="Morgan R.D."/>
            <person name="Murray N.E."/>
            <person name="Nagaraja V."/>
            <person name="Piekarowicz A."/>
            <person name="Pingoud A."/>
            <person name="Raleigh E."/>
            <person name="Rao D.N."/>
            <person name="Reich N."/>
            <person name="Repin V.E."/>
            <person name="Selker E.U."/>
            <person name="Shaw P.C."/>
            <person name="Stein D.C."/>
            <person name="Stoddard B.L."/>
            <person name="Szybalski W."/>
            <person name="Trautner T.A."/>
            <person name="Van Etten J.L."/>
            <person name="Vitor J.M."/>
            <person name="Wilson G.G."/>
            <person name="Xu S.Y."/>
        </authorList>
    </citation>
    <scope>NOMENCLATURE</scope>
    <scope>SUBTYPE</scope>
</reference>
<gene>
    <name type="primary">mjaVIRP</name>
    <name type="ordered locus">MJ1208.1</name>
</gene>
<protein>
    <recommendedName>
        <fullName evidence="1">Putative type II restriction enzyme MjaVIP</fullName>
        <shortName>R.MjaVIP</shortName>
        <ecNumber>3.1.21.4</ecNumber>
    </recommendedName>
    <alternativeName>
        <fullName>Endonuclease MjaVIP</fullName>
    </alternativeName>
    <alternativeName>
        <fullName>Type-2 restriction enzyme MjaVIP</fullName>
    </alternativeName>
</protein>